<protein>
    <recommendedName>
        <fullName evidence="1">Orotidine 5'-phosphate decarboxylase</fullName>
        <ecNumber evidence="1">4.1.1.23</ecNumber>
    </recommendedName>
    <alternativeName>
        <fullName evidence="1">OMP decarboxylase</fullName>
        <shortName evidence="1">OMPDCase</shortName>
        <shortName evidence="1">OMPdecase</shortName>
    </alternativeName>
</protein>
<proteinExistence type="inferred from homology"/>
<evidence type="ECO:0000255" key="1">
    <source>
        <dbReference type="HAMAP-Rule" id="MF_01200"/>
    </source>
</evidence>
<dbReference type="EC" id="4.1.1.23" evidence="1"/>
<dbReference type="EMBL" id="CP000114">
    <property type="protein sequence ID" value="ABA45369.1"/>
    <property type="molecule type" value="Genomic_DNA"/>
</dbReference>
<dbReference type="RefSeq" id="WP_000890174.1">
    <property type="nucleotide sequence ID" value="NC_007432.1"/>
</dbReference>
<dbReference type="SMR" id="Q3K145"/>
<dbReference type="KEGG" id="sak:SAK_1137"/>
<dbReference type="HOGENOM" id="CLU_067069_1_1_9"/>
<dbReference type="UniPathway" id="UPA00070">
    <property type="reaction ID" value="UER00120"/>
</dbReference>
<dbReference type="GO" id="GO:0005829">
    <property type="term" value="C:cytosol"/>
    <property type="evidence" value="ECO:0007669"/>
    <property type="project" value="TreeGrafter"/>
</dbReference>
<dbReference type="GO" id="GO:0004590">
    <property type="term" value="F:orotidine-5'-phosphate decarboxylase activity"/>
    <property type="evidence" value="ECO:0007669"/>
    <property type="project" value="UniProtKB-UniRule"/>
</dbReference>
<dbReference type="GO" id="GO:0006207">
    <property type="term" value="P:'de novo' pyrimidine nucleobase biosynthetic process"/>
    <property type="evidence" value="ECO:0007669"/>
    <property type="project" value="InterPro"/>
</dbReference>
<dbReference type="GO" id="GO:0044205">
    <property type="term" value="P:'de novo' UMP biosynthetic process"/>
    <property type="evidence" value="ECO:0007669"/>
    <property type="project" value="UniProtKB-UniRule"/>
</dbReference>
<dbReference type="CDD" id="cd04725">
    <property type="entry name" value="OMP_decarboxylase_like"/>
    <property type="match status" value="1"/>
</dbReference>
<dbReference type="FunFam" id="3.20.20.70:FF:000015">
    <property type="entry name" value="Orotidine 5'-phosphate decarboxylase"/>
    <property type="match status" value="1"/>
</dbReference>
<dbReference type="Gene3D" id="3.20.20.70">
    <property type="entry name" value="Aldolase class I"/>
    <property type="match status" value="1"/>
</dbReference>
<dbReference type="HAMAP" id="MF_01200_B">
    <property type="entry name" value="OMPdecase_type1_B"/>
    <property type="match status" value="1"/>
</dbReference>
<dbReference type="InterPro" id="IPR013785">
    <property type="entry name" value="Aldolase_TIM"/>
</dbReference>
<dbReference type="InterPro" id="IPR014732">
    <property type="entry name" value="OMPdecase"/>
</dbReference>
<dbReference type="InterPro" id="IPR018089">
    <property type="entry name" value="OMPdecase_AS"/>
</dbReference>
<dbReference type="InterPro" id="IPR047596">
    <property type="entry name" value="OMPdecase_bac"/>
</dbReference>
<dbReference type="InterPro" id="IPR001754">
    <property type="entry name" value="OMPdeCOase_dom"/>
</dbReference>
<dbReference type="InterPro" id="IPR011060">
    <property type="entry name" value="RibuloseP-bd_barrel"/>
</dbReference>
<dbReference type="NCBIfam" id="NF001273">
    <property type="entry name" value="PRK00230.1"/>
    <property type="match status" value="1"/>
</dbReference>
<dbReference type="NCBIfam" id="TIGR01740">
    <property type="entry name" value="pyrF"/>
    <property type="match status" value="1"/>
</dbReference>
<dbReference type="PANTHER" id="PTHR32119">
    <property type="entry name" value="OROTIDINE 5'-PHOSPHATE DECARBOXYLASE"/>
    <property type="match status" value="1"/>
</dbReference>
<dbReference type="PANTHER" id="PTHR32119:SF2">
    <property type="entry name" value="OROTIDINE 5'-PHOSPHATE DECARBOXYLASE"/>
    <property type="match status" value="1"/>
</dbReference>
<dbReference type="Pfam" id="PF00215">
    <property type="entry name" value="OMPdecase"/>
    <property type="match status" value="1"/>
</dbReference>
<dbReference type="SMART" id="SM00934">
    <property type="entry name" value="OMPdecase"/>
    <property type="match status" value="1"/>
</dbReference>
<dbReference type="SUPFAM" id="SSF51366">
    <property type="entry name" value="Ribulose-phoshate binding barrel"/>
    <property type="match status" value="1"/>
</dbReference>
<dbReference type="PROSITE" id="PS00156">
    <property type="entry name" value="OMPDECASE"/>
    <property type="match status" value="1"/>
</dbReference>
<name>PYRF_STRA1</name>
<feature type="chain" id="PRO_0000241912" description="Orotidine 5'-phosphate decarboxylase">
    <location>
        <begin position="1"/>
        <end position="233"/>
    </location>
</feature>
<feature type="active site" description="Proton donor" evidence="1">
    <location>
        <position position="63"/>
    </location>
</feature>
<feature type="binding site" evidence="1">
    <location>
        <position position="11"/>
    </location>
    <ligand>
        <name>substrate</name>
    </ligand>
</feature>
<feature type="binding site" evidence="1">
    <location>
        <position position="34"/>
    </location>
    <ligand>
        <name>substrate</name>
    </ligand>
</feature>
<feature type="binding site" evidence="1">
    <location>
        <begin position="61"/>
        <end position="70"/>
    </location>
    <ligand>
        <name>substrate</name>
    </ligand>
</feature>
<feature type="binding site" evidence="1">
    <location>
        <position position="117"/>
    </location>
    <ligand>
        <name>substrate</name>
    </ligand>
</feature>
<feature type="binding site" evidence="1">
    <location>
        <position position="179"/>
    </location>
    <ligand>
        <name>substrate</name>
    </ligand>
</feature>
<feature type="binding site" evidence="1">
    <location>
        <position position="189"/>
    </location>
    <ligand>
        <name>substrate</name>
    </ligand>
</feature>
<feature type="binding site" evidence="1">
    <location>
        <position position="209"/>
    </location>
    <ligand>
        <name>substrate</name>
    </ligand>
</feature>
<feature type="binding site" evidence="1">
    <location>
        <position position="210"/>
    </location>
    <ligand>
        <name>substrate</name>
    </ligand>
</feature>
<organism>
    <name type="scientific">Streptococcus agalactiae serotype Ia (strain ATCC 27591 / A909 / CDC SS700)</name>
    <dbReference type="NCBI Taxonomy" id="205921"/>
    <lineage>
        <taxon>Bacteria</taxon>
        <taxon>Bacillati</taxon>
        <taxon>Bacillota</taxon>
        <taxon>Bacilli</taxon>
        <taxon>Lactobacillales</taxon>
        <taxon>Streptococcaceae</taxon>
        <taxon>Streptococcus</taxon>
    </lineage>
</organism>
<comment type="function">
    <text evidence="1">Catalyzes the decarboxylation of orotidine 5'-monophosphate (OMP) to uridine 5'-monophosphate (UMP).</text>
</comment>
<comment type="catalytic activity">
    <reaction evidence="1">
        <text>orotidine 5'-phosphate + H(+) = UMP + CO2</text>
        <dbReference type="Rhea" id="RHEA:11596"/>
        <dbReference type="ChEBI" id="CHEBI:15378"/>
        <dbReference type="ChEBI" id="CHEBI:16526"/>
        <dbReference type="ChEBI" id="CHEBI:57538"/>
        <dbReference type="ChEBI" id="CHEBI:57865"/>
        <dbReference type="EC" id="4.1.1.23"/>
    </reaction>
</comment>
<comment type="pathway">
    <text evidence="1">Pyrimidine metabolism; UMP biosynthesis via de novo pathway; UMP from orotate: step 2/2.</text>
</comment>
<comment type="subunit">
    <text evidence="1">Homodimer.</text>
</comment>
<comment type="similarity">
    <text evidence="1">Belongs to the OMP decarboxylase family. Type 1 subfamily.</text>
</comment>
<keyword id="KW-0210">Decarboxylase</keyword>
<keyword id="KW-0456">Lyase</keyword>
<keyword id="KW-0665">Pyrimidine biosynthesis</keyword>
<reference key="1">
    <citation type="journal article" date="2005" name="Proc. Natl. Acad. Sci. U.S.A.">
        <title>Genome analysis of multiple pathogenic isolates of Streptococcus agalactiae: implications for the microbial 'pan-genome'.</title>
        <authorList>
            <person name="Tettelin H."/>
            <person name="Masignani V."/>
            <person name="Cieslewicz M.J."/>
            <person name="Donati C."/>
            <person name="Medini D."/>
            <person name="Ward N.L."/>
            <person name="Angiuoli S.V."/>
            <person name="Crabtree J."/>
            <person name="Jones A.L."/>
            <person name="Durkin A.S."/>
            <person name="DeBoy R.T."/>
            <person name="Davidsen T.M."/>
            <person name="Mora M."/>
            <person name="Scarselli M."/>
            <person name="Margarit y Ros I."/>
            <person name="Peterson J.D."/>
            <person name="Hauser C.R."/>
            <person name="Sundaram J.P."/>
            <person name="Nelson W.C."/>
            <person name="Madupu R."/>
            <person name="Brinkac L.M."/>
            <person name="Dodson R.J."/>
            <person name="Rosovitz M.J."/>
            <person name="Sullivan S.A."/>
            <person name="Daugherty S.C."/>
            <person name="Haft D.H."/>
            <person name="Selengut J."/>
            <person name="Gwinn M.L."/>
            <person name="Zhou L."/>
            <person name="Zafar N."/>
            <person name="Khouri H."/>
            <person name="Radune D."/>
            <person name="Dimitrov G."/>
            <person name="Watkins K."/>
            <person name="O'Connor K.J."/>
            <person name="Smith S."/>
            <person name="Utterback T.R."/>
            <person name="White O."/>
            <person name="Rubens C.E."/>
            <person name="Grandi G."/>
            <person name="Madoff L.C."/>
            <person name="Kasper D.L."/>
            <person name="Telford J.L."/>
            <person name="Wessels M.R."/>
            <person name="Rappuoli R."/>
            <person name="Fraser C.M."/>
        </authorList>
    </citation>
    <scope>NUCLEOTIDE SEQUENCE [LARGE SCALE GENOMIC DNA]</scope>
    <source>
        <strain>ATCC 27591 / A909 / CDC SS700</strain>
    </source>
</reference>
<accession>Q3K145</accession>
<sequence length="233" mass="26020">MLEKCPIIALDFSDLASVTTFLEHFPKEELLFVKIGMELYYSEGPSIIRYIKSLGHRIFLDLKLHDIPNTVRSSMSVLAKLGIDMTNVHAAGGVEMMKAAREGLGEGPILLAVTQLTSTSQEQMQVDQHINLSVVDSVCHYAQKAQEAGLDGVVASAQEVKQIKKQTNEHFICLTPGIRPPQTNQLDDQKRTMTPEQARIVGADYIVVGRPITKAENPYQAYLDIKEEWNRIK</sequence>
<gene>
    <name evidence="1" type="primary">pyrF</name>
    <name type="ordered locus">SAK_1137</name>
</gene>